<dbReference type="EMBL" id="CR382126">
    <property type="protein sequence ID" value="CAG98515.1"/>
    <property type="molecule type" value="Genomic_DNA"/>
</dbReference>
<dbReference type="RefSeq" id="XP_455807.1">
    <property type="nucleotide sequence ID" value="XM_455807.1"/>
</dbReference>
<dbReference type="FunCoup" id="Q6CJT2">
    <property type="interactions" value="122"/>
</dbReference>
<dbReference type="STRING" id="284590.Q6CJT2"/>
<dbReference type="PaxDb" id="284590-Q6CJT2"/>
<dbReference type="KEGG" id="kla:KLLA0_F16148g"/>
<dbReference type="eggNOG" id="ENOG502QPHX">
    <property type="taxonomic scope" value="Eukaryota"/>
</dbReference>
<dbReference type="HOGENOM" id="CLU_050427_0_0_1"/>
<dbReference type="InParanoid" id="Q6CJT2"/>
<dbReference type="OMA" id="GIVHECD"/>
<dbReference type="Proteomes" id="UP000000598">
    <property type="component" value="Chromosome F"/>
</dbReference>
<dbReference type="GO" id="GO:0005634">
    <property type="term" value="C:nucleus"/>
    <property type="evidence" value="ECO:0007669"/>
    <property type="project" value="UniProtKB-SubCell"/>
</dbReference>
<dbReference type="GO" id="GO:2000640">
    <property type="term" value="P:positive regulation of SREBP signaling pathway"/>
    <property type="evidence" value="ECO:0007669"/>
    <property type="project" value="TreeGrafter"/>
</dbReference>
<dbReference type="GO" id="GO:0006417">
    <property type="term" value="P:regulation of translation"/>
    <property type="evidence" value="ECO:0007669"/>
    <property type="project" value="UniProtKB-KW"/>
</dbReference>
<dbReference type="InterPro" id="IPR024318">
    <property type="entry name" value="Nro1/ETT1"/>
</dbReference>
<dbReference type="PANTHER" id="PTHR28290">
    <property type="entry name" value="ENHANCER OF TRANSLATION TERMINATION 1"/>
    <property type="match status" value="1"/>
</dbReference>
<dbReference type="PANTHER" id="PTHR28290:SF1">
    <property type="entry name" value="ENHANCER OF TRANSLATION TERMINATION 1"/>
    <property type="match status" value="1"/>
</dbReference>
<dbReference type="Pfam" id="PF12753">
    <property type="entry name" value="Nro1"/>
    <property type="match status" value="1"/>
</dbReference>
<comment type="function">
    <text evidence="1">Required for correct translation termination and probably involved in regulation of hypoxic gene expression.</text>
</comment>
<comment type="subcellular location">
    <subcellularLocation>
        <location evidence="1">Nucleus</location>
    </subcellularLocation>
</comment>
<comment type="similarity">
    <text evidence="3">Belongs to the ETT1 family.</text>
</comment>
<evidence type="ECO:0000250" key="1"/>
<evidence type="ECO:0000256" key="2">
    <source>
        <dbReference type="SAM" id="MobiDB-lite"/>
    </source>
</evidence>
<evidence type="ECO:0000305" key="3"/>
<feature type="chain" id="PRO_0000406617" description="Enhancer of translation termination 1">
    <location>
        <begin position="1"/>
        <end position="427"/>
    </location>
</feature>
<feature type="region of interest" description="Disordered" evidence="2">
    <location>
        <begin position="1"/>
        <end position="37"/>
    </location>
</feature>
<keyword id="KW-0539">Nucleus</keyword>
<keyword id="KW-1185">Reference proteome</keyword>
<keyword id="KW-0804">Transcription</keyword>
<keyword id="KW-0805">Transcription regulation</keyword>
<keyword id="KW-0810">Translation regulation</keyword>
<reference key="1">
    <citation type="journal article" date="2004" name="Nature">
        <title>Genome evolution in yeasts.</title>
        <authorList>
            <person name="Dujon B."/>
            <person name="Sherman D."/>
            <person name="Fischer G."/>
            <person name="Durrens P."/>
            <person name="Casaregola S."/>
            <person name="Lafontaine I."/>
            <person name="de Montigny J."/>
            <person name="Marck C."/>
            <person name="Neuveglise C."/>
            <person name="Talla E."/>
            <person name="Goffard N."/>
            <person name="Frangeul L."/>
            <person name="Aigle M."/>
            <person name="Anthouard V."/>
            <person name="Babour A."/>
            <person name="Barbe V."/>
            <person name="Barnay S."/>
            <person name="Blanchin S."/>
            <person name="Beckerich J.-M."/>
            <person name="Beyne E."/>
            <person name="Bleykasten C."/>
            <person name="Boisrame A."/>
            <person name="Boyer J."/>
            <person name="Cattolico L."/>
            <person name="Confanioleri F."/>
            <person name="de Daruvar A."/>
            <person name="Despons L."/>
            <person name="Fabre E."/>
            <person name="Fairhead C."/>
            <person name="Ferry-Dumazet H."/>
            <person name="Groppi A."/>
            <person name="Hantraye F."/>
            <person name="Hennequin C."/>
            <person name="Jauniaux N."/>
            <person name="Joyet P."/>
            <person name="Kachouri R."/>
            <person name="Kerrest A."/>
            <person name="Koszul R."/>
            <person name="Lemaire M."/>
            <person name="Lesur I."/>
            <person name="Ma L."/>
            <person name="Muller H."/>
            <person name="Nicaud J.-M."/>
            <person name="Nikolski M."/>
            <person name="Oztas S."/>
            <person name="Ozier-Kalogeropoulos O."/>
            <person name="Pellenz S."/>
            <person name="Potier S."/>
            <person name="Richard G.-F."/>
            <person name="Straub M.-L."/>
            <person name="Suleau A."/>
            <person name="Swennen D."/>
            <person name="Tekaia F."/>
            <person name="Wesolowski-Louvel M."/>
            <person name="Westhof E."/>
            <person name="Wirth B."/>
            <person name="Zeniou-Meyer M."/>
            <person name="Zivanovic Y."/>
            <person name="Bolotin-Fukuhara M."/>
            <person name="Thierry A."/>
            <person name="Bouchier C."/>
            <person name="Caudron B."/>
            <person name="Scarpelli C."/>
            <person name="Gaillardin C."/>
            <person name="Weissenbach J."/>
            <person name="Wincker P."/>
            <person name="Souciet J.-L."/>
        </authorList>
    </citation>
    <scope>NUCLEOTIDE SEQUENCE [LARGE SCALE GENOMIC DNA]</scope>
    <source>
        <strain>ATCC 8585 / CBS 2359 / DSM 70799 / NBRC 1267 / NRRL Y-1140 / WM37</strain>
    </source>
</reference>
<sequence length="427" mass="49044">MAKRALGLGKSKKQKKQKVAVPEEQSSEGTVPAPSAANQIEIALDENEDADDELVQLKGLWETFLKDKDNQLLLNGVVHECDRLLRLQDNDSTIKLSDLFHSIYAQALAELTVFLPEETDDEEKKYERMNEFFDAALERYRLGAEKYPETPLLSLTQTKIILQRIPLQYISQLSPLDQNDEKYKLYDLLESAKSSYTLSSNQHQLAYDVLLSFYDLLDIIETFEDKEELEDGLDSDDEGEELVEVVLHENHPLTKIKKNMNQNYEWLKENLLNLFNDISSSFCNKVGPDIDKDHPTVVLFKSIARTLGQLYLKLAEEPSKTFAELMYDSDDEEQTDKEALEKAKNAQSKAIPLVEYAIRYLQEAKVEDEPQTWVDVAEAIIDLGNLYDYESKEQEDSYKRAEEILLKANKATHGKYQVILDNLLNKD</sequence>
<protein>
    <recommendedName>
        <fullName>Enhancer of translation termination 1</fullName>
    </recommendedName>
</protein>
<organism>
    <name type="scientific">Kluyveromyces lactis (strain ATCC 8585 / CBS 2359 / DSM 70799 / NBRC 1267 / NRRL Y-1140 / WM37)</name>
    <name type="common">Yeast</name>
    <name type="synonym">Candida sphaerica</name>
    <dbReference type="NCBI Taxonomy" id="284590"/>
    <lineage>
        <taxon>Eukaryota</taxon>
        <taxon>Fungi</taxon>
        <taxon>Dikarya</taxon>
        <taxon>Ascomycota</taxon>
        <taxon>Saccharomycotina</taxon>
        <taxon>Saccharomycetes</taxon>
        <taxon>Saccharomycetales</taxon>
        <taxon>Saccharomycetaceae</taxon>
        <taxon>Kluyveromyces</taxon>
    </lineage>
</organism>
<accession>Q6CJT2</accession>
<proteinExistence type="inferred from homology"/>
<name>ETT1_KLULA</name>
<gene>
    <name type="primary">ETT1</name>
    <name type="ordered locus">KLLA0F16148g</name>
</gene>